<comment type="similarity">
    <text evidence="1">Belongs to the Ves family.</text>
</comment>
<name>VES_ECO8A</name>
<protein>
    <recommendedName>
        <fullName evidence="1">Protein Ves</fullName>
    </recommendedName>
</protein>
<feature type="chain" id="PRO_1000201505" description="Protein Ves">
    <location>
        <begin position="1"/>
        <end position="191"/>
    </location>
</feature>
<gene>
    <name evidence="1" type="primary">ves</name>
    <name type="ordered locus">ECIAI1_1803</name>
</gene>
<reference key="1">
    <citation type="journal article" date="2009" name="PLoS Genet.">
        <title>Organised genome dynamics in the Escherichia coli species results in highly diverse adaptive paths.</title>
        <authorList>
            <person name="Touchon M."/>
            <person name="Hoede C."/>
            <person name="Tenaillon O."/>
            <person name="Barbe V."/>
            <person name="Baeriswyl S."/>
            <person name="Bidet P."/>
            <person name="Bingen E."/>
            <person name="Bonacorsi S."/>
            <person name="Bouchier C."/>
            <person name="Bouvet O."/>
            <person name="Calteau A."/>
            <person name="Chiapello H."/>
            <person name="Clermont O."/>
            <person name="Cruveiller S."/>
            <person name="Danchin A."/>
            <person name="Diard M."/>
            <person name="Dossat C."/>
            <person name="Karoui M.E."/>
            <person name="Frapy E."/>
            <person name="Garry L."/>
            <person name="Ghigo J.M."/>
            <person name="Gilles A.M."/>
            <person name="Johnson J."/>
            <person name="Le Bouguenec C."/>
            <person name="Lescat M."/>
            <person name="Mangenot S."/>
            <person name="Martinez-Jehanne V."/>
            <person name="Matic I."/>
            <person name="Nassif X."/>
            <person name="Oztas S."/>
            <person name="Petit M.A."/>
            <person name="Pichon C."/>
            <person name="Rouy Z."/>
            <person name="Ruf C.S."/>
            <person name="Schneider D."/>
            <person name="Tourret J."/>
            <person name="Vacherie B."/>
            <person name="Vallenet D."/>
            <person name="Medigue C."/>
            <person name="Rocha E.P.C."/>
            <person name="Denamur E."/>
        </authorList>
    </citation>
    <scope>NUCLEOTIDE SEQUENCE [LARGE SCALE GENOMIC DNA]</scope>
    <source>
        <strain>IAI1</strain>
    </source>
</reference>
<accession>B7M1F4</accession>
<evidence type="ECO:0000255" key="1">
    <source>
        <dbReference type="HAMAP-Rule" id="MF_01591"/>
    </source>
</evidence>
<organism>
    <name type="scientific">Escherichia coli O8 (strain IAI1)</name>
    <dbReference type="NCBI Taxonomy" id="585034"/>
    <lineage>
        <taxon>Bacteria</taxon>
        <taxon>Pseudomonadati</taxon>
        <taxon>Pseudomonadota</taxon>
        <taxon>Gammaproteobacteria</taxon>
        <taxon>Enterobacterales</taxon>
        <taxon>Enterobacteriaceae</taxon>
        <taxon>Escherichia</taxon>
    </lineage>
</organism>
<dbReference type="EMBL" id="CU928160">
    <property type="protein sequence ID" value="CAQ98659.1"/>
    <property type="molecule type" value="Genomic_DNA"/>
</dbReference>
<dbReference type="RefSeq" id="WP_001297807.1">
    <property type="nucleotide sequence ID" value="NC_011741.1"/>
</dbReference>
<dbReference type="SMR" id="B7M1F4"/>
<dbReference type="KEGG" id="ecr:ECIAI1_1803"/>
<dbReference type="HOGENOM" id="CLU_090931_5_0_6"/>
<dbReference type="CDD" id="cd20293">
    <property type="entry name" value="cupin_HutD_N"/>
    <property type="match status" value="1"/>
</dbReference>
<dbReference type="Gene3D" id="2.60.120.10">
    <property type="entry name" value="Jelly Rolls"/>
    <property type="match status" value="1"/>
</dbReference>
<dbReference type="HAMAP" id="MF_01591">
    <property type="entry name" value="Ves"/>
    <property type="match status" value="1"/>
</dbReference>
<dbReference type="InterPro" id="IPR014710">
    <property type="entry name" value="RmlC-like_jellyroll"/>
</dbReference>
<dbReference type="InterPro" id="IPR011051">
    <property type="entry name" value="RmlC_Cupin_sf"/>
</dbReference>
<dbReference type="InterPro" id="IPR010282">
    <property type="entry name" value="Uncharacterised_HutD/Ves"/>
</dbReference>
<dbReference type="InterPro" id="IPR023482">
    <property type="entry name" value="Uncharacterised_Ves"/>
</dbReference>
<dbReference type="NCBIfam" id="NF008488">
    <property type="entry name" value="PRK11396.1"/>
    <property type="match status" value="1"/>
</dbReference>
<dbReference type="PANTHER" id="PTHR37943">
    <property type="entry name" value="PROTEIN VES"/>
    <property type="match status" value="1"/>
</dbReference>
<dbReference type="PANTHER" id="PTHR37943:SF1">
    <property type="entry name" value="PROTEIN VES"/>
    <property type="match status" value="1"/>
</dbReference>
<dbReference type="Pfam" id="PF05962">
    <property type="entry name" value="HutD"/>
    <property type="match status" value="1"/>
</dbReference>
<dbReference type="SUPFAM" id="SSF51182">
    <property type="entry name" value="RmlC-like cupins"/>
    <property type="match status" value="1"/>
</dbReference>
<sequence length="191" mass="21543">MEYFDMRKMSVNLWRNAAGETREICTFPPAKRDFYWRASIASIAANGEFSLFPGMERIVTLLEGGEMLLESADRFNHTLKPLQPFAFAADQVVKAKLTAGQMSMDFNIMTRLDVCKAKVRIAERTFTTFGSRGGVVFVINGAWQLGDKLLTTDQGACWFDGRHTLRLLQPQGKLLFSEINWLAGHSPDQVQ</sequence>
<proteinExistence type="inferred from homology"/>